<feature type="chain" id="PRO_0000402689" description="Ureidoacrylate amidohydrolase RutB">
    <location>
        <begin position="1"/>
        <end position="236"/>
    </location>
</feature>
<feature type="active site" description="Proton acceptor" evidence="1">
    <location>
        <position position="24"/>
    </location>
</feature>
<feature type="active site" evidence="1">
    <location>
        <position position="133"/>
    </location>
</feature>
<feature type="active site" description="Nucleophile" evidence="1">
    <location>
        <position position="166"/>
    </location>
</feature>
<comment type="function">
    <text evidence="1">Hydrolyzes ureidoacrylate to form aminoacrylate and carbamate. The carbamate hydrolyzes spontaneously, thereby releasing one of the nitrogen atoms of the pyrimidine ring as ammonia and one of its carbon atoms as CO2.</text>
</comment>
<comment type="catalytic activity">
    <reaction evidence="1">
        <text>(Z)-3-ureidoacrylate + H2O + H(+) = (Z)-3-aminoacrylate + NH4(+) + CO2</text>
        <dbReference type="Rhea" id="RHEA:42624"/>
        <dbReference type="ChEBI" id="CHEBI:15377"/>
        <dbReference type="ChEBI" id="CHEBI:15378"/>
        <dbReference type="ChEBI" id="CHEBI:16526"/>
        <dbReference type="ChEBI" id="CHEBI:28938"/>
        <dbReference type="ChEBI" id="CHEBI:59891"/>
        <dbReference type="ChEBI" id="CHEBI:59894"/>
        <dbReference type="EC" id="3.5.1.110"/>
    </reaction>
</comment>
<comment type="catalytic activity">
    <reaction evidence="1">
        <text>(Z)-3-ureidoacrylate + H2O = (Z)-3-aminoacrylate + carbamate + H(+)</text>
        <dbReference type="Rhea" id="RHEA:31603"/>
        <dbReference type="ChEBI" id="CHEBI:13941"/>
        <dbReference type="ChEBI" id="CHEBI:15377"/>
        <dbReference type="ChEBI" id="CHEBI:15378"/>
        <dbReference type="ChEBI" id="CHEBI:59891"/>
        <dbReference type="ChEBI" id="CHEBI:59894"/>
    </reaction>
</comment>
<comment type="catalytic activity">
    <reaction evidence="1">
        <text>(Z)-2-methylureidoacrylate + H2O + H(+) = (Z)-2-methylaminoacrylate + NH4(+) + CO2</text>
        <dbReference type="Rhea" id="RHEA:42620"/>
        <dbReference type="ChEBI" id="CHEBI:15377"/>
        <dbReference type="ChEBI" id="CHEBI:15378"/>
        <dbReference type="ChEBI" id="CHEBI:16526"/>
        <dbReference type="ChEBI" id="CHEBI:28938"/>
        <dbReference type="ChEBI" id="CHEBI:143783"/>
        <dbReference type="ChEBI" id="CHEBI:145735"/>
        <dbReference type="EC" id="3.5.1.110"/>
    </reaction>
</comment>
<comment type="similarity">
    <text evidence="1">Belongs to the isochorismatase family. RutB subfamily.</text>
</comment>
<protein>
    <recommendedName>
        <fullName evidence="1">Ureidoacrylate amidohydrolase RutB</fullName>
        <ecNumber evidence="1">3.5.1.110</ecNumber>
    </recommendedName>
</protein>
<accession>A6T7A1</accession>
<keyword id="KW-0378">Hydrolase</keyword>
<evidence type="ECO:0000255" key="1">
    <source>
        <dbReference type="HAMAP-Rule" id="MF_00830"/>
    </source>
</evidence>
<organism>
    <name type="scientific">Klebsiella pneumoniae subsp. pneumoniae (strain ATCC 700721 / MGH 78578)</name>
    <dbReference type="NCBI Taxonomy" id="272620"/>
    <lineage>
        <taxon>Bacteria</taxon>
        <taxon>Pseudomonadati</taxon>
        <taxon>Pseudomonadota</taxon>
        <taxon>Gammaproteobacteria</taxon>
        <taxon>Enterobacterales</taxon>
        <taxon>Enterobacteriaceae</taxon>
        <taxon>Klebsiella/Raoultella group</taxon>
        <taxon>Klebsiella</taxon>
        <taxon>Klebsiella pneumoniae complex</taxon>
    </lineage>
</organism>
<sequence length="236" mass="25817">MITLPARPESLSFAPQQSALIVVDMQNAYASQGGYLDLAGFDVSATRPVIDNINTAVAAARAAGMLIIWFQNGWDDQYVEAGGPGSPNYHKSNALKTMRQRPELQGKLLAKGGWDYQLVDELTPQEGDIVLPKPRYSGFFNTPLDSILRSRGIRHLVFTGIATNVCVESTLRDGFFLEYFGIVLEDATHQAGPAFAQQAALFNIETFFGWVSDVESFCHALSPAAPLALAKEKRYA</sequence>
<name>RUTB_KLEP7</name>
<reference key="1">
    <citation type="submission" date="2006-09" db="EMBL/GenBank/DDBJ databases">
        <authorList>
            <consortium name="The Klebsiella pneumonia Genome Sequencing Project"/>
            <person name="McClelland M."/>
            <person name="Sanderson E.K."/>
            <person name="Spieth J."/>
            <person name="Clifton W.S."/>
            <person name="Latreille P."/>
            <person name="Sabo A."/>
            <person name="Pepin K."/>
            <person name="Bhonagiri V."/>
            <person name="Porwollik S."/>
            <person name="Ali J."/>
            <person name="Wilson R.K."/>
        </authorList>
    </citation>
    <scope>NUCLEOTIDE SEQUENCE [LARGE SCALE GENOMIC DNA]</scope>
    <source>
        <strain>ATCC 700721 / MGH 78578</strain>
    </source>
</reference>
<gene>
    <name evidence="1" type="primary">rutB</name>
    <name type="ordered locus">KPN78578_10110</name>
    <name type="ORF">KPN_01037</name>
</gene>
<dbReference type="EC" id="3.5.1.110" evidence="1"/>
<dbReference type="EMBL" id="CP000647">
    <property type="protein sequence ID" value="ABR76472.1"/>
    <property type="molecule type" value="Genomic_DNA"/>
</dbReference>
<dbReference type="RefSeq" id="WP_009308386.1">
    <property type="nucleotide sequence ID" value="NC_009648.1"/>
</dbReference>
<dbReference type="SMR" id="A6T7A1"/>
<dbReference type="STRING" id="272620.KPN_01037"/>
<dbReference type="PaxDb" id="272620-KPN_01037"/>
<dbReference type="EnsemblBacteria" id="ABR76472">
    <property type="protein sequence ID" value="ABR76472"/>
    <property type="gene ID" value="KPN_01037"/>
</dbReference>
<dbReference type="KEGG" id="kpn:KPN_01037"/>
<dbReference type="HOGENOM" id="CLU_068979_8_0_6"/>
<dbReference type="Proteomes" id="UP000000265">
    <property type="component" value="Chromosome"/>
</dbReference>
<dbReference type="GO" id="GO:0016811">
    <property type="term" value="F:hydrolase activity, acting on carbon-nitrogen (but not peptide) bonds, in linear amides"/>
    <property type="evidence" value="ECO:0007669"/>
    <property type="project" value="UniProtKB-UniRule"/>
</dbReference>
<dbReference type="GO" id="GO:0019740">
    <property type="term" value="P:nitrogen utilization"/>
    <property type="evidence" value="ECO:0007669"/>
    <property type="project" value="UniProtKB-UniRule"/>
</dbReference>
<dbReference type="GO" id="GO:0006212">
    <property type="term" value="P:uracil catabolic process"/>
    <property type="evidence" value="ECO:0007669"/>
    <property type="project" value="UniProtKB-UniRule"/>
</dbReference>
<dbReference type="CDD" id="cd00431">
    <property type="entry name" value="cysteine_hydrolases"/>
    <property type="match status" value="1"/>
</dbReference>
<dbReference type="Gene3D" id="3.40.50.850">
    <property type="entry name" value="Isochorismatase-like"/>
    <property type="match status" value="1"/>
</dbReference>
<dbReference type="HAMAP" id="MF_00830">
    <property type="entry name" value="RutB"/>
    <property type="match status" value="1"/>
</dbReference>
<dbReference type="InterPro" id="IPR000868">
    <property type="entry name" value="Isochorismatase-like_dom"/>
</dbReference>
<dbReference type="InterPro" id="IPR050272">
    <property type="entry name" value="Isochorismatase-like_hydrls"/>
</dbReference>
<dbReference type="InterPro" id="IPR036380">
    <property type="entry name" value="Isochorismatase-like_sf"/>
</dbReference>
<dbReference type="InterPro" id="IPR019916">
    <property type="entry name" value="RutB"/>
</dbReference>
<dbReference type="NCBIfam" id="TIGR03614">
    <property type="entry name" value="RutB"/>
    <property type="match status" value="1"/>
</dbReference>
<dbReference type="PANTHER" id="PTHR43540:SF6">
    <property type="entry name" value="ISOCHORISMATASE-LIKE DOMAIN-CONTAINING PROTEIN"/>
    <property type="match status" value="1"/>
</dbReference>
<dbReference type="PANTHER" id="PTHR43540">
    <property type="entry name" value="PEROXYUREIDOACRYLATE/UREIDOACRYLATE AMIDOHYDROLASE-RELATED"/>
    <property type="match status" value="1"/>
</dbReference>
<dbReference type="Pfam" id="PF00857">
    <property type="entry name" value="Isochorismatase"/>
    <property type="match status" value="1"/>
</dbReference>
<dbReference type="SUPFAM" id="SSF52499">
    <property type="entry name" value="Isochorismatase-like hydrolases"/>
    <property type="match status" value="1"/>
</dbReference>
<proteinExistence type="inferred from homology"/>